<gene>
    <name evidence="1" type="primary">rplC</name>
    <name type="ordered locus">Bamb_0267</name>
</gene>
<sequence length="217" mass="22698">MMSLGLVGRKVGMTRIFTAEGDSIPVTVLDVSDNRVTQIKTVETDGYTAVQVAFGSRRASRVTKPLAGHLAKAGVEAGEILKEFRIDAAKAAELSNGAVVGADLFEVGQKVDVQGVSIGKGYAGTIKRYNFSSGRATHGNSRSHNVPGSIGMAQDPGRVFPGKRMTGHLGDVTVTVQNLEIARIDAERKLLLVKGAIPGAKGGKVFVTPAVKTKGAK</sequence>
<accession>Q0BJ46</accession>
<organism>
    <name type="scientific">Burkholderia ambifaria (strain ATCC BAA-244 / DSM 16087 / CCUG 44356 / LMG 19182 / AMMD)</name>
    <name type="common">Burkholderia cepacia (strain AMMD)</name>
    <dbReference type="NCBI Taxonomy" id="339670"/>
    <lineage>
        <taxon>Bacteria</taxon>
        <taxon>Pseudomonadati</taxon>
        <taxon>Pseudomonadota</taxon>
        <taxon>Betaproteobacteria</taxon>
        <taxon>Burkholderiales</taxon>
        <taxon>Burkholderiaceae</taxon>
        <taxon>Burkholderia</taxon>
        <taxon>Burkholderia cepacia complex</taxon>
    </lineage>
</organism>
<evidence type="ECO:0000255" key="1">
    <source>
        <dbReference type="HAMAP-Rule" id="MF_01325"/>
    </source>
</evidence>
<evidence type="ECO:0000305" key="2"/>
<feature type="chain" id="PRO_1000052021" description="Large ribosomal subunit protein uL3">
    <location>
        <begin position="1"/>
        <end position="217"/>
    </location>
</feature>
<feature type="modified residue" description="N5-methylglutamine" evidence="1">
    <location>
        <position position="154"/>
    </location>
</feature>
<dbReference type="EMBL" id="CP000440">
    <property type="protein sequence ID" value="ABI85827.1"/>
    <property type="molecule type" value="Genomic_DNA"/>
</dbReference>
<dbReference type="SMR" id="Q0BJ46"/>
<dbReference type="KEGG" id="bam:Bamb_0267"/>
<dbReference type="eggNOG" id="COG0087">
    <property type="taxonomic scope" value="Bacteria"/>
</dbReference>
<dbReference type="Proteomes" id="UP000000662">
    <property type="component" value="Chromosome 1"/>
</dbReference>
<dbReference type="GO" id="GO:0022625">
    <property type="term" value="C:cytosolic large ribosomal subunit"/>
    <property type="evidence" value="ECO:0007669"/>
    <property type="project" value="TreeGrafter"/>
</dbReference>
<dbReference type="GO" id="GO:0019843">
    <property type="term" value="F:rRNA binding"/>
    <property type="evidence" value="ECO:0007669"/>
    <property type="project" value="UniProtKB-UniRule"/>
</dbReference>
<dbReference type="GO" id="GO:0003735">
    <property type="term" value="F:structural constituent of ribosome"/>
    <property type="evidence" value="ECO:0007669"/>
    <property type="project" value="InterPro"/>
</dbReference>
<dbReference type="GO" id="GO:0006412">
    <property type="term" value="P:translation"/>
    <property type="evidence" value="ECO:0007669"/>
    <property type="project" value="UniProtKB-UniRule"/>
</dbReference>
<dbReference type="FunFam" id="2.40.30.10:FF:000004">
    <property type="entry name" value="50S ribosomal protein L3"/>
    <property type="match status" value="1"/>
</dbReference>
<dbReference type="FunFam" id="3.30.160.810:FF:000001">
    <property type="entry name" value="50S ribosomal protein L3"/>
    <property type="match status" value="1"/>
</dbReference>
<dbReference type="Gene3D" id="3.30.160.810">
    <property type="match status" value="1"/>
</dbReference>
<dbReference type="Gene3D" id="2.40.30.10">
    <property type="entry name" value="Translation factors"/>
    <property type="match status" value="1"/>
</dbReference>
<dbReference type="HAMAP" id="MF_01325_B">
    <property type="entry name" value="Ribosomal_uL3_B"/>
    <property type="match status" value="1"/>
</dbReference>
<dbReference type="InterPro" id="IPR000597">
    <property type="entry name" value="Ribosomal_uL3"/>
</dbReference>
<dbReference type="InterPro" id="IPR019927">
    <property type="entry name" value="Ribosomal_uL3_bac/org-type"/>
</dbReference>
<dbReference type="InterPro" id="IPR019926">
    <property type="entry name" value="Ribosomal_uL3_CS"/>
</dbReference>
<dbReference type="InterPro" id="IPR009000">
    <property type="entry name" value="Transl_B-barrel_sf"/>
</dbReference>
<dbReference type="NCBIfam" id="TIGR03625">
    <property type="entry name" value="L3_bact"/>
    <property type="match status" value="1"/>
</dbReference>
<dbReference type="PANTHER" id="PTHR11229">
    <property type="entry name" value="50S RIBOSOMAL PROTEIN L3"/>
    <property type="match status" value="1"/>
</dbReference>
<dbReference type="PANTHER" id="PTHR11229:SF16">
    <property type="entry name" value="LARGE RIBOSOMAL SUBUNIT PROTEIN UL3C"/>
    <property type="match status" value="1"/>
</dbReference>
<dbReference type="Pfam" id="PF00297">
    <property type="entry name" value="Ribosomal_L3"/>
    <property type="match status" value="1"/>
</dbReference>
<dbReference type="SUPFAM" id="SSF50447">
    <property type="entry name" value="Translation proteins"/>
    <property type="match status" value="1"/>
</dbReference>
<dbReference type="PROSITE" id="PS00474">
    <property type="entry name" value="RIBOSOMAL_L3"/>
    <property type="match status" value="1"/>
</dbReference>
<keyword id="KW-0488">Methylation</keyword>
<keyword id="KW-0687">Ribonucleoprotein</keyword>
<keyword id="KW-0689">Ribosomal protein</keyword>
<keyword id="KW-0694">RNA-binding</keyword>
<keyword id="KW-0699">rRNA-binding</keyword>
<name>RL3_BURCM</name>
<proteinExistence type="inferred from homology"/>
<protein>
    <recommendedName>
        <fullName evidence="1">Large ribosomal subunit protein uL3</fullName>
    </recommendedName>
    <alternativeName>
        <fullName evidence="2">50S ribosomal protein L3</fullName>
    </alternativeName>
</protein>
<reference key="1">
    <citation type="submission" date="2006-08" db="EMBL/GenBank/DDBJ databases">
        <title>Complete sequence of chromosome 1 of Burkholderia cepacia AMMD.</title>
        <authorList>
            <person name="Copeland A."/>
            <person name="Lucas S."/>
            <person name="Lapidus A."/>
            <person name="Barry K."/>
            <person name="Detter J.C."/>
            <person name="Glavina del Rio T."/>
            <person name="Hammon N."/>
            <person name="Israni S."/>
            <person name="Pitluck S."/>
            <person name="Bruce D."/>
            <person name="Chain P."/>
            <person name="Malfatti S."/>
            <person name="Shin M."/>
            <person name="Vergez L."/>
            <person name="Schmutz J."/>
            <person name="Larimer F."/>
            <person name="Land M."/>
            <person name="Hauser L."/>
            <person name="Kyrpides N."/>
            <person name="Kim E."/>
            <person name="Parke J."/>
            <person name="Coenye T."/>
            <person name="Konstantinidis K."/>
            <person name="Ramette A."/>
            <person name="Tiedje J."/>
            <person name="Richardson P."/>
        </authorList>
    </citation>
    <scope>NUCLEOTIDE SEQUENCE [LARGE SCALE GENOMIC DNA]</scope>
    <source>
        <strain>ATCC BAA-244 / DSM 16087 / CCUG 44356 / LMG 19182 / AMMD</strain>
    </source>
</reference>
<comment type="function">
    <text evidence="1">One of the primary rRNA binding proteins, it binds directly near the 3'-end of the 23S rRNA, where it nucleates assembly of the 50S subunit.</text>
</comment>
<comment type="subunit">
    <text evidence="1">Part of the 50S ribosomal subunit. Forms a cluster with proteins L14 and L19.</text>
</comment>
<comment type="PTM">
    <text evidence="1">Methylated by PrmB.</text>
</comment>
<comment type="similarity">
    <text evidence="1">Belongs to the universal ribosomal protein uL3 family.</text>
</comment>